<name>YUZM_BACSU</name>
<feature type="chain" id="PRO_0000386674" description="Uncharacterized protein YuzM">
    <location>
        <begin position="1"/>
        <end position="81"/>
    </location>
</feature>
<accession>C0H3R1</accession>
<organism>
    <name type="scientific">Bacillus subtilis (strain 168)</name>
    <dbReference type="NCBI Taxonomy" id="224308"/>
    <lineage>
        <taxon>Bacteria</taxon>
        <taxon>Bacillati</taxon>
        <taxon>Bacillota</taxon>
        <taxon>Bacilli</taxon>
        <taxon>Bacillales</taxon>
        <taxon>Bacillaceae</taxon>
        <taxon>Bacillus</taxon>
    </lineage>
</organism>
<proteinExistence type="predicted"/>
<protein>
    <recommendedName>
        <fullName>Uncharacterized protein YuzM</fullName>
    </recommendedName>
</protein>
<gene>
    <name type="primary">yuzM</name>
    <name type="ordered locus">BSU32859</name>
</gene>
<dbReference type="EMBL" id="AL009126">
    <property type="protein sequence ID" value="CAX52690.1"/>
    <property type="molecule type" value="Genomic_DNA"/>
</dbReference>
<dbReference type="RefSeq" id="WP_003228567.1">
    <property type="nucleotide sequence ID" value="NZ_OZ025638.1"/>
</dbReference>
<dbReference type="RefSeq" id="YP_003097784.1">
    <property type="nucleotide sequence ID" value="NC_000964.3"/>
</dbReference>
<dbReference type="SMR" id="C0H3R1"/>
<dbReference type="FunCoup" id="C0H3R1">
    <property type="interactions" value="47"/>
</dbReference>
<dbReference type="STRING" id="224308.BSU32859"/>
<dbReference type="PaxDb" id="224308-BSU32859"/>
<dbReference type="EnsemblBacteria" id="CAX52690">
    <property type="protein sequence ID" value="CAX52690"/>
    <property type="gene ID" value="BSU_32859"/>
</dbReference>
<dbReference type="GeneID" id="8302981"/>
<dbReference type="KEGG" id="bsu:BSU32859"/>
<dbReference type="PATRIC" id="fig|224308.179.peg.3561"/>
<dbReference type="eggNOG" id="ENOG5032Y7E">
    <property type="taxonomic scope" value="Bacteria"/>
</dbReference>
<dbReference type="InParanoid" id="C0H3R1"/>
<dbReference type="OrthoDB" id="1799385at2"/>
<dbReference type="BioCyc" id="BSUB:BSU32859-MONOMER"/>
<dbReference type="Proteomes" id="UP000001570">
    <property type="component" value="Chromosome"/>
</dbReference>
<keyword id="KW-1185">Reference proteome</keyword>
<reference key="1">
    <citation type="journal article" date="1997" name="Nature">
        <title>The complete genome sequence of the Gram-positive bacterium Bacillus subtilis.</title>
        <authorList>
            <person name="Kunst F."/>
            <person name="Ogasawara N."/>
            <person name="Moszer I."/>
            <person name="Albertini A.M."/>
            <person name="Alloni G."/>
            <person name="Azevedo V."/>
            <person name="Bertero M.G."/>
            <person name="Bessieres P."/>
            <person name="Bolotin A."/>
            <person name="Borchert S."/>
            <person name="Borriss R."/>
            <person name="Boursier L."/>
            <person name="Brans A."/>
            <person name="Braun M."/>
            <person name="Brignell S.C."/>
            <person name="Bron S."/>
            <person name="Brouillet S."/>
            <person name="Bruschi C.V."/>
            <person name="Caldwell B."/>
            <person name="Capuano V."/>
            <person name="Carter N.M."/>
            <person name="Choi S.-K."/>
            <person name="Codani J.-J."/>
            <person name="Connerton I.F."/>
            <person name="Cummings N.J."/>
            <person name="Daniel R.A."/>
            <person name="Denizot F."/>
            <person name="Devine K.M."/>
            <person name="Duesterhoeft A."/>
            <person name="Ehrlich S.D."/>
            <person name="Emmerson P.T."/>
            <person name="Entian K.-D."/>
            <person name="Errington J."/>
            <person name="Fabret C."/>
            <person name="Ferrari E."/>
            <person name="Foulger D."/>
            <person name="Fritz C."/>
            <person name="Fujita M."/>
            <person name="Fujita Y."/>
            <person name="Fuma S."/>
            <person name="Galizzi A."/>
            <person name="Galleron N."/>
            <person name="Ghim S.-Y."/>
            <person name="Glaser P."/>
            <person name="Goffeau A."/>
            <person name="Golightly E.J."/>
            <person name="Grandi G."/>
            <person name="Guiseppi G."/>
            <person name="Guy B.J."/>
            <person name="Haga K."/>
            <person name="Haiech J."/>
            <person name="Harwood C.R."/>
            <person name="Henaut A."/>
            <person name="Hilbert H."/>
            <person name="Holsappel S."/>
            <person name="Hosono S."/>
            <person name="Hullo M.-F."/>
            <person name="Itaya M."/>
            <person name="Jones L.-M."/>
            <person name="Joris B."/>
            <person name="Karamata D."/>
            <person name="Kasahara Y."/>
            <person name="Klaerr-Blanchard M."/>
            <person name="Klein C."/>
            <person name="Kobayashi Y."/>
            <person name="Koetter P."/>
            <person name="Koningstein G."/>
            <person name="Krogh S."/>
            <person name="Kumano M."/>
            <person name="Kurita K."/>
            <person name="Lapidus A."/>
            <person name="Lardinois S."/>
            <person name="Lauber J."/>
            <person name="Lazarevic V."/>
            <person name="Lee S.-M."/>
            <person name="Levine A."/>
            <person name="Liu H."/>
            <person name="Masuda S."/>
            <person name="Mauel C."/>
            <person name="Medigue C."/>
            <person name="Medina N."/>
            <person name="Mellado R.P."/>
            <person name="Mizuno M."/>
            <person name="Moestl D."/>
            <person name="Nakai S."/>
            <person name="Noback M."/>
            <person name="Noone D."/>
            <person name="O'Reilly M."/>
            <person name="Ogawa K."/>
            <person name="Ogiwara A."/>
            <person name="Oudega B."/>
            <person name="Park S.-H."/>
            <person name="Parro V."/>
            <person name="Pohl T.M."/>
            <person name="Portetelle D."/>
            <person name="Porwollik S."/>
            <person name="Prescott A.M."/>
            <person name="Presecan E."/>
            <person name="Pujic P."/>
            <person name="Purnelle B."/>
            <person name="Rapoport G."/>
            <person name="Rey M."/>
            <person name="Reynolds S."/>
            <person name="Rieger M."/>
            <person name="Rivolta C."/>
            <person name="Rocha E."/>
            <person name="Roche B."/>
            <person name="Rose M."/>
            <person name="Sadaie Y."/>
            <person name="Sato T."/>
            <person name="Scanlan E."/>
            <person name="Schleich S."/>
            <person name="Schroeter R."/>
            <person name="Scoffone F."/>
            <person name="Sekiguchi J."/>
            <person name="Sekowska A."/>
            <person name="Seror S.J."/>
            <person name="Serror P."/>
            <person name="Shin B.-S."/>
            <person name="Soldo B."/>
            <person name="Sorokin A."/>
            <person name="Tacconi E."/>
            <person name="Takagi T."/>
            <person name="Takahashi H."/>
            <person name="Takemaru K."/>
            <person name="Takeuchi M."/>
            <person name="Tamakoshi A."/>
            <person name="Tanaka T."/>
            <person name="Terpstra P."/>
            <person name="Tognoni A."/>
            <person name="Tosato V."/>
            <person name="Uchiyama S."/>
            <person name="Vandenbol M."/>
            <person name="Vannier F."/>
            <person name="Vassarotti A."/>
            <person name="Viari A."/>
            <person name="Wambutt R."/>
            <person name="Wedler E."/>
            <person name="Wedler H."/>
            <person name="Weitzenegger T."/>
            <person name="Winters P."/>
            <person name="Wipat A."/>
            <person name="Yamamoto H."/>
            <person name="Yamane K."/>
            <person name="Yasumoto K."/>
            <person name="Yata K."/>
            <person name="Yoshida K."/>
            <person name="Yoshikawa H.-F."/>
            <person name="Zumstein E."/>
            <person name="Yoshikawa H."/>
            <person name="Danchin A."/>
        </authorList>
    </citation>
    <scope>NUCLEOTIDE SEQUENCE [LARGE SCALE GENOMIC DNA]</scope>
    <source>
        <strain>168</strain>
    </source>
</reference>
<sequence length="81" mass="9625">MDNQQQSQMPPSVISTKDHLYLNDMLNWNLLAMKKAHFMAQQCQDQTLKQELDRVGHMHHDHYQRILKHLQPGQQQSGYIQ</sequence>